<dbReference type="PIR" id="A00132">
    <property type="entry name" value="CCAGB6"/>
</dbReference>
<dbReference type="SMR" id="P00139"/>
<dbReference type="GO" id="GO:0042597">
    <property type="term" value="C:periplasmic space"/>
    <property type="evidence" value="ECO:0007669"/>
    <property type="project" value="InterPro"/>
</dbReference>
<dbReference type="GO" id="GO:0009055">
    <property type="term" value="F:electron transfer activity"/>
    <property type="evidence" value="ECO:0007669"/>
    <property type="project" value="InterPro"/>
</dbReference>
<dbReference type="GO" id="GO:0020037">
    <property type="term" value="F:heme binding"/>
    <property type="evidence" value="ECO:0007669"/>
    <property type="project" value="InterPro"/>
</dbReference>
<dbReference type="GO" id="GO:0005506">
    <property type="term" value="F:iron ion binding"/>
    <property type="evidence" value="ECO:0007669"/>
    <property type="project" value="InterPro"/>
</dbReference>
<dbReference type="GO" id="GO:0022900">
    <property type="term" value="P:electron transport chain"/>
    <property type="evidence" value="ECO:0007669"/>
    <property type="project" value="InterPro"/>
</dbReference>
<dbReference type="Gene3D" id="1.20.120.10">
    <property type="entry name" value="Cytochrome c/b562"/>
    <property type="match status" value="1"/>
</dbReference>
<dbReference type="InterPro" id="IPR010980">
    <property type="entry name" value="Cyt_c/b562"/>
</dbReference>
<dbReference type="InterPro" id="IPR002321">
    <property type="entry name" value="Cyt_c_II"/>
</dbReference>
<dbReference type="InterPro" id="IPR012127">
    <property type="entry name" value="Cyt_c_prime"/>
</dbReference>
<dbReference type="InterPro" id="IPR015984">
    <property type="entry name" value="Cyt_c_prime_subgr"/>
</dbReference>
<dbReference type="Pfam" id="PF01322">
    <property type="entry name" value="Cytochrom_C_2"/>
    <property type="match status" value="1"/>
</dbReference>
<dbReference type="PIRSF" id="PIRSF000027">
    <property type="entry name" value="Cytc_c_prime"/>
    <property type="match status" value="1"/>
</dbReference>
<dbReference type="PRINTS" id="PR00608">
    <property type="entry name" value="CYTCHROMECII"/>
</dbReference>
<dbReference type="SUPFAM" id="SSF47175">
    <property type="entry name" value="Cytochromes"/>
    <property type="match status" value="1"/>
</dbReference>
<dbReference type="PROSITE" id="PS51009">
    <property type="entry name" value="CYTCII"/>
    <property type="match status" value="1"/>
</dbReference>
<name>C556_AGRTB</name>
<accession>P00139</accession>
<proteinExistence type="evidence at protein level"/>
<organism>
    <name type="scientific">Agrobacterium tumefaciens (strain B2A)</name>
    <dbReference type="NCBI Taxonomy" id="371"/>
    <lineage>
        <taxon>Bacteria</taxon>
        <taxon>Pseudomonadati</taxon>
        <taxon>Pseudomonadota</taxon>
        <taxon>Alphaproteobacteria</taxon>
        <taxon>Hyphomicrobiales</taxon>
        <taxon>Rhizobiaceae</taxon>
        <taxon>Rhizobium/Agrobacterium group</taxon>
        <taxon>Agrobacterium</taxon>
        <taxon>Agrobacterium tumefaciens complex</taxon>
    </lineage>
</organism>
<sequence>AGEVEKREGMMKQIGGAMGSLAAISKGEKPFDADTVKAAVTTIGTNAKAFPEQFPAGTETGSAAAPAIWENFEDFKAKAAKLGTDADIVLANLPGDQAGVATAMKTLGADCGTCHQTYRLKK</sequence>
<evidence type="ECO:0000250" key="1">
    <source>
        <dbReference type="UniProtKB" id="P00150"/>
    </source>
</evidence>
<protein>
    <recommendedName>
        <fullName>Cytochrome c-556</fullName>
    </recommendedName>
    <alternativeName>
        <fullName>Cytochrome c556</fullName>
    </alternativeName>
</protein>
<feature type="chain" id="PRO_0000108411" description="Cytochrome c-556">
    <location>
        <begin position="1"/>
        <end position="122"/>
    </location>
</feature>
<feature type="binding site" description="axial binding residue">
    <location>
        <position position="11"/>
    </location>
    <ligand>
        <name>heme</name>
        <dbReference type="ChEBI" id="CHEBI:30413"/>
    </ligand>
    <ligandPart>
        <name>Fe</name>
        <dbReference type="ChEBI" id="CHEBI:18248"/>
    </ligandPart>
</feature>
<feature type="binding site" description="axial binding residue" evidence="1">
    <location>
        <position position="11"/>
    </location>
    <ligand>
        <name>heme c</name>
        <dbReference type="ChEBI" id="CHEBI:61717"/>
    </ligand>
    <ligandPart>
        <name>Fe</name>
        <dbReference type="ChEBI" id="CHEBI:18248"/>
    </ligandPart>
</feature>
<feature type="binding site" description="covalent">
    <location>
        <position position="111"/>
    </location>
    <ligand>
        <name>heme</name>
        <dbReference type="ChEBI" id="CHEBI:30413"/>
    </ligand>
</feature>
<feature type="binding site" description="covalent" evidence="1">
    <location>
        <position position="111"/>
    </location>
    <ligand>
        <name>heme c</name>
        <dbReference type="ChEBI" id="CHEBI:61717"/>
    </ligand>
</feature>
<feature type="binding site" description="covalent">
    <location>
        <position position="114"/>
    </location>
    <ligand>
        <name>heme</name>
        <dbReference type="ChEBI" id="CHEBI:30413"/>
    </ligand>
</feature>
<feature type="binding site" description="covalent" evidence="1">
    <location>
        <position position="114"/>
    </location>
    <ligand>
        <name>heme c</name>
        <dbReference type="ChEBI" id="CHEBI:61717"/>
    </ligand>
</feature>
<feature type="binding site" description="axial binding residue">
    <location>
        <position position="115"/>
    </location>
    <ligand>
        <name>heme</name>
        <dbReference type="ChEBI" id="CHEBI:30413"/>
    </ligand>
    <ligandPart>
        <name>Fe</name>
        <dbReference type="ChEBI" id="CHEBI:18248"/>
    </ligandPart>
</feature>
<feature type="binding site" description="axial binding residue" evidence="1">
    <location>
        <position position="115"/>
    </location>
    <ligand>
        <name>heme c</name>
        <dbReference type="ChEBI" id="CHEBI:61717"/>
    </ligand>
    <ligandPart>
        <name>Fe</name>
        <dbReference type="ChEBI" id="CHEBI:18248"/>
    </ligandPart>
</feature>
<reference key="1">
    <citation type="book" date="1980" name="Protides of the biological fluids, Proc. 28th colloquium">
        <title>Cytochromes c of two different sequence classes in Agrobacterium tumefaciens.</title>
        <editorList>
            <person name="Peeters H."/>
        </editorList>
        <authorList>
            <person name="van Beeumen J."/>
            <person name="Tempst P."/>
            <person name="Stevens P."/>
            <person name="Bral D."/>
            <person name="van Damme J."/>
            <person name="de Ley J."/>
        </authorList>
    </citation>
    <scope>PROTEIN SEQUENCE</scope>
</reference>
<keyword id="KW-0903">Direct protein sequencing</keyword>
<keyword id="KW-0249">Electron transport</keyword>
<keyword id="KW-0349">Heme</keyword>
<keyword id="KW-0408">Iron</keyword>
<keyword id="KW-0479">Metal-binding</keyword>
<keyword id="KW-0813">Transport</keyword>
<comment type="function">
    <text>Low-spin monoheme cytochrome c.</text>
</comment>
<comment type="subunit">
    <text>Monomer.</text>
</comment>
<comment type="PTM">
    <text evidence="1">Binds 1 heme c group covalently per subunit.</text>
</comment>